<keyword id="KW-1185">Reference proteome</keyword>
<gene>
    <name type="ordered locus">RP144</name>
</gene>
<dbReference type="EMBL" id="AJ235270">
    <property type="protein sequence ID" value="CAA14612.1"/>
    <property type="molecule type" value="Genomic_DNA"/>
</dbReference>
<dbReference type="PIR" id="E71724">
    <property type="entry name" value="E71724"/>
</dbReference>
<dbReference type="RefSeq" id="NP_220535.1">
    <property type="nucleotide sequence ID" value="NC_000963.1"/>
</dbReference>
<dbReference type="RefSeq" id="WP_004599761.1">
    <property type="nucleotide sequence ID" value="NC_000963.1"/>
</dbReference>
<dbReference type="SMR" id="Q9ZE18"/>
<dbReference type="STRING" id="272947.gene:17555227"/>
<dbReference type="EnsemblBacteria" id="CAA14612">
    <property type="protein sequence ID" value="CAA14612"/>
    <property type="gene ID" value="CAA14612"/>
</dbReference>
<dbReference type="KEGG" id="rpr:RP144"/>
<dbReference type="PATRIC" id="fig|272947.5.peg.147"/>
<dbReference type="HOGENOM" id="CLU_1979882_0_0_5"/>
<dbReference type="OrthoDB" id="7161020at2"/>
<dbReference type="Proteomes" id="UP000002480">
    <property type="component" value="Chromosome"/>
</dbReference>
<feature type="chain" id="PRO_0000101319" description="Uncharacterized protein RP144">
    <location>
        <begin position="1"/>
        <end position="144"/>
    </location>
</feature>
<feature type="region of interest" description="Disordered" evidence="1">
    <location>
        <begin position="125"/>
        <end position="144"/>
    </location>
</feature>
<feature type="compositionally biased region" description="Polar residues" evidence="1">
    <location>
        <begin position="125"/>
        <end position="135"/>
    </location>
</feature>
<organism>
    <name type="scientific">Rickettsia prowazekii (strain Madrid E)</name>
    <dbReference type="NCBI Taxonomy" id="272947"/>
    <lineage>
        <taxon>Bacteria</taxon>
        <taxon>Pseudomonadati</taxon>
        <taxon>Pseudomonadota</taxon>
        <taxon>Alphaproteobacteria</taxon>
        <taxon>Rickettsiales</taxon>
        <taxon>Rickettsiaceae</taxon>
        <taxon>Rickettsieae</taxon>
        <taxon>Rickettsia</taxon>
        <taxon>typhus group</taxon>
    </lineage>
</organism>
<accession>Q9ZE18</accession>
<reference key="1">
    <citation type="journal article" date="1998" name="Nature">
        <title>The genome sequence of Rickettsia prowazekii and the origin of mitochondria.</title>
        <authorList>
            <person name="Andersson S.G.E."/>
            <person name="Zomorodipour A."/>
            <person name="Andersson J.O."/>
            <person name="Sicheritz-Ponten T."/>
            <person name="Alsmark U.C.M."/>
            <person name="Podowski R.M."/>
            <person name="Naeslund A.K."/>
            <person name="Eriksson A.-S."/>
            <person name="Winkler H.H."/>
            <person name="Kurland C.G."/>
        </authorList>
    </citation>
    <scope>NUCLEOTIDE SEQUENCE [LARGE SCALE GENOMIC DNA]</scope>
    <source>
        <strain>Madrid E</strain>
    </source>
</reference>
<proteinExistence type="predicted"/>
<protein>
    <recommendedName>
        <fullName>Uncharacterized protein RP144</fullName>
    </recommendedName>
</protein>
<name>Y144_RICPR</name>
<evidence type="ECO:0000256" key="1">
    <source>
        <dbReference type="SAM" id="MobiDB-lite"/>
    </source>
</evidence>
<sequence>MSNVAENISKLPEEQEKINKLVDQYKNLMPQEQKEVDKKLKLYFTKDELEQDELKSRMNKIRSNLSQQEQEKLQAGNSTIGEIAKDVLSLVKGIINLVENISKVIKNPTGAVYEWFQNELNQVKPQQQNNHQLQSKPKAASISR</sequence>